<comment type="function">
    <text evidence="1">Heme-dependent dioxygenase that catalyzes the oxidative cleavage of the L-tryptophan (L-Trp) pyrrole ring and converts L-tryptophan to N-formyl-L-kynurenine. Catalyzes the oxidative cleavage of the indole moiety.</text>
</comment>
<comment type="catalytic activity">
    <reaction evidence="1">
        <text>L-tryptophan + O2 = N-formyl-L-kynurenine</text>
        <dbReference type="Rhea" id="RHEA:24536"/>
        <dbReference type="ChEBI" id="CHEBI:15379"/>
        <dbReference type="ChEBI" id="CHEBI:57912"/>
        <dbReference type="ChEBI" id="CHEBI:58629"/>
        <dbReference type="EC" id="1.13.11.11"/>
    </reaction>
</comment>
<comment type="cofactor">
    <cofactor evidence="1">
        <name>heme</name>
        <dbReference type="ChEBI" id="CHEBI:30413"/>
    </cofactor>
    <text evidence="1">Binds 1 heme group per subunit.</text>
</comment>
<comment type="pathway">
    <text evidence="1">Amino-acid degradation; L-tryptophan degradation via kynurenine pathway; L-kynurenine from L-tryptophan: step 1/2.</text>
</comment>
<comment type="subunit">
    <text evidence="1">Homotetramer.</text>
</comment>
<comment type="similarity">
    <text evidence="1">Belongs to the tryptophan 2,3-dioxygenase family.</text>
</comment>
<sequence>MKENEKVIMEKGIHTDFKENMTYGEYLQLDSLLSSQKRLSDHHDEMLFIVIHQASELWMKLILHELNAAIESIKQDKLQPAFKMLARVSKIQSQIIQSWDILATLTPSEYIEFRDSLGQASGFQSYQYRMIEYALGYKTPHALKIYEKDPELHARLHAALHAPSLYDVAIQALVKEGFPIHKDVLNRDITQPYEEDATVEAAWLEVYADVKKYWNLYQLAEKLIDIEDWLQQWRFRHMKTVERIIGHKMGTGGSSGVSYLKRVLDQRFFPELWNVRTKL</sequence>
<organism>
    <name type="scientific">Bacillus cereus (strain ZK / E33L)</name>
    <dbReference type="NCBI Taxonomy" id="288681"/>
    <lineage>
        <taxon>Bacteria</taxon>
        <taxon>Bacillati</taxon>
        <taxon>Bacillota</taxon>
        <taxon>Bacilli</taxon>
        <taxon>Bacillales</taxon>
        <taxon>Bacillaceae</taxon>
        <taxon>Bacillus</taxon>
        <taxon>Bacillus cereus group</taxon>
    </lineage>
</organism>
<gene>
    <name evidence="1" type="primary">kynA</name>
    <name type="ordered locus">BCE33L2486</name>
</gene>
<protein>
    <recommendedName>
        <fullName evidence="1">Tryptophan 2,3-dioxygenase</fullName>
        <shortName evidence="1">TDO</shortName>
        <ecNumber evidence="1">1.13.11.11</ecNumber>
    </recommendedName>
    <alternativeName>
        <fullName evidence="1">Tryptamin 2,3-dioxygenase</fullName>
    </alternativeName>
    <alternativeName>
        <fullName evidence="1">Tryptophan oxygenase</fullName>
        <shortName evidence="1">TO</shortName>
        <shortName evidence="1">TRPO</shortName>
    </alternativeName>
    <alternativeName>
        <fullName evidence="1">Tryptophan pyrrolase</fullName>
    </alternativeName>
    <alternativeName>
        <fullName evidence="1">Tryptophanase</fullName>
    </alternativeName>
</protein>
<dbReference type="EC" id="1.13.11.11" evidence="1"/>
<dbReference type="EMBL" id="CP000001">
    <property type="protein sequence ID" value="AAU17773.1"/>
    <property type="molecule type" value="Genomic_DNA"/>
</dbReference>
<dbReference type="RefSeq" id="WP_000661952.1">
    <property type="nucleotide sequence ID" value="NC_006274.1"/>
</dbReference>
<dbReference type="SMR" id="Q63AJ2"/>
<dbReference type="KEGG" id="bcz:BCE33L2486"/>
<dbReference type="PATRIC" id="fig|288681.22.peg.2989"/>
<dbReference type="UniPathway" id="UPA00333">
    <property type="reaction ID" value="UER00453"/>
</dbReference>
<dbReference type="Proteomes" id="UP000002612">
    <property type="component" value="Chromosome"/>
</dbReference>
<dbReference type="GO" id="GO:0020037">
    <property type="term" value="F:heme binding"/>
    <property type="evidence" value="ECO:0000250"/>
    <property type="project" value="UniProtKB"/>
</dbReference>
<dbReference type="GO" id="GO:0046872">
    <property type="term" value="F:metal ion binding"/>
    <property type="evidence" value="ECO:0007669"/>
    <property type="project" value="UniProtKB-KW"/>
</dbReference>
<dbReference type="GO" id="GO:0004833">
    <property type="term" value="F:tryptophan 2,3-dioxygenase activity"/>
    <property type="evidence" value="ECO:0000250"/>
    <property type="project" value="UniProtKB"/>
</dbReference>
<dbReference type="GO" id="GO:0019442">
    <property type="term" value="P:L-tryptophan catabolic process to acetyl-CoA"/>
    <property type="evidence" value="ECO:0007669"/>
    <property type="project" value="TreeGrafter"/>
</dbReference>
<dbReference type="GO" id="GO:0019441">
    <property type="term" value="P:L-tryptophan catabolic process to kynurenine"/>
    <property type="evidence" value="ECO:0000250"/>
    <property type="project" value="UniProtKB"/>
</dbReference>
<dbReference type="FunFam" id="1.20.58.480:FF:000001">
    <property type="entry name" value="Tryptophan 2,3-dioxygenase"/>
    <property type="match status" value="1"/>
</dbReference>
<dbReference type="Gene3D" id="1.20.58.480">
    <property type="match status" value="1"/>
</dbReference>
<dbReference type="HAMAP" id="MF_01972">
    <property type="entry name" value="T23O"/>
    <property type="match status" value="1"/>
</dbReference>
<dbReference type="InterPro" id="IPR037217">
    <property type="entry name" value="Trp/Indoleamine_2_3_dOase-like"/>
</dbReference>
<dbReference type="InterPro" id="IPR017485">
    <property type="entry name" value="Trp_2-3-dOase_bac"/>
</dbReference>
<dbReference type="InterPro" id="IPR004981">
    <property type="entry name" value="Trp_2_3_dOase"/>
</dbReference>
<dbReference type="NCBIfam" id="TIGR03036">
    <property type="entry name" value="trp_2_3_diox"/>
    <property type="match status" value="1"/>
</dbReference>
<dbReference type="PANTHER" id="PTHR10138">
    <property type="entry name" value="TRYPTOPHAN 2,3-DIOXYGENASE"/>
    <property type="match status" value="1"/>
</dbReference>
<dbReference type="PANTHER" id="PTHR10138:SF0">
    <property type="entry name" value="TRYPTOPHAN 2,3-DIOXYGENASE"/>
    <property type="match status" value="1"/>
</dbReference>
<dbReference type="Pfam" id="PF03301">
    <property type="entry name" value="Trp_dioxygenase"/>
    <property type="match status" value="1"/>
</dbReference>
<dbReference type="SUPFAM" id="SSF140959">
    <property type="entry name" value="Indolic compounds 2,3-dioxygenase-like"/>
    <property type="match status" value="1"/>
</dbReference>
<keyword id="KW-0223">Dioxygenase</keyword>
<keyword id="KW-0349">Heme</keyword>
<keyword id="KW-0408">Iron</keyword>
<keyword id="KW-0479">Metal-binding</keyword>
<keyword id="KW-0560">Oxidoreductase</keyword>
<keyword id="KW-0823">Tryptophan catabolism</keyword>
<accession>Q63AJ2</accession>
<reference key="1">
    <citation type="journal article" date="2006" name="J. Bacteriol.">
        <title>Pathogenomic sequence analysis of Bacillus cereus and Bacillus thuringiensis isolates closely related to Bacillus anthracis.</title>
        <authorList>
            <person name="Han C.S."/>
            <person name="Xie G."/>
            <person name="Challacombe J.F."/>
            <person name="Altherr M.R."/>
            <person name="Bhotika S.S."/>
            <person name="Bruce D."/>
            <person name="Campbell C.S."/>
            <person name="Campbell M.L."/>
            <person name="Chen J."/>
            <person name="Chertkov O."/>
            <person name="Cleland C."/>
            <person name="Dimitrijevic M."/>
            <person name="Doggett N.A."/>
            <person name="Fawcett J.J."/>
            <person name="Glavina T."/>
            <person name="Goodwin L.A."/>
            <person name="Hill K.K."/>
            <person name="Hitchcock P."/>
            <person name="Jackson P.J."/>
            <person name="Keim P."/>
            <person name="Kewalramani A.R."/>
            <person name="Longmire J."/>
            <person name="Lucas S."/>
            <person name="Malfatti S."/>
            <person name="McMurry K."/>
            <person name="Meincke L.J."/>
            <person name="Misra M."/>
            <person name="Moseman B.L."/>
            <person name="Mundt M."/>
            <person name="Munk A.C."/>
            <person name="Okinaka R.T."/>
            <person name="Parson-Quintana B."/>
            <person name="Reilly L.P."/>
            <person name="Richardson P."/>
            <person name="Robinson D.L."/>
            <person name="Rubin E."/>
            <person name="Saunders E."/>
            <person name="Tapia R."/>
            <person name="Tesmer J.G."/>
            <person name="Thayer N."/>
            <person name="Thompson L.S."/>
            <person name="Tice H."/>
            <person name="Ticknor L.O."/>
            <person name="Wills P.L."/>
            <person name="Brettin T.S."/>
            <person name="Gilna P."/>
        </authorList>
    </citation>
    <scope>NUCLEOTIDE SEQUENCE [LARGE SCALE GENOMIC DNA]</scope>
    <source>
        <strain>ZK / E33L</strain>
    </source>
</reference>
<proteinExistence type="inferred from homology"/>
<evidence type="ECO:0000255" key="1">
    <source>
        <dbReference type="HAMAP-Rule" id="MF_01972"/>
    </source>
</evidence>
<name>T23O_BACCZ</name>
<feature type="chain" id="PRO_0000360086" description="Tryptophan 2,3-dioxygenase">
    <location>
        <begin position="1"/>
        <end position="279"/>
    </location>
</feature>
<feature type="binding site" evidence="1">
    <location>
        <begin position="48"/>
        <end position="52"/>
    </location>
    <ligand>
        <name>substrate</name>
    </ligand>
</feature>
<feature type="binding site" evidence="1">
    <location>
        <position position="110"/>
    </location>
    <ligand>
        <name>substrate</name>
    </ligand>
</feature>
<feature type="binding site" evidence="1">
    <location>
        <position position="114"/>
    </location>
    <ligand>
        <name>substrate</name>
    </ligand>
</feature>
<feature type="binding site" description="axial binding residue" evidence="1">
    <location>
        <position position="237"/>
    </location>
    <ligand>
        <name>heme</name>
        <dbReference type="ChEBI" id="CHEBI:30413"/>
    </ligand>
    <ligandPart>
        <name>Fe</name>
        <dbReference type="ChEBI" id="CHEBI:18248"/>
    </ligandPart>
</feature>
<feature type="binding site" evidence="1">
    <location>
        <position position="251"/>
    </location>
    <ligand>
        <name>substrate</name>
    </ligand>
</feature>